<keyword id="KW-1185">Reference proteome</keyword>
<name>Y2172_YERPE</name>
<accession>Q8ZEJ5</accession>
<accession>Q0WEZ2</accession>
<protein>
    <recommendedName>
        <fullName evidence="1">UPF0225 protein YPO2172/y2149/YP_1971</fullName>
    </recommendedName>
</protein>
<organism>
    <name type="scientific">Yersinia pestis</name>
    <dbReference type="NCBI Taxonomy" id="632"/>
    <lineage>
        <taxon>Bacteria</taxon>
        <taxon>Pseudomonadati</taxon>
        <taxon>Pseudomonadota</taxon>
        <taxon>Gammaproteobacteria</taxon>
        <taxon>Enterobacterales</taxon>
        <taxon>Yersiniaceae</taxon>
        <taxon>Yersinia</taxon>
    </lineage>
</organism>
<comment type="similarity">
    <text evidence="1">Belongs to the UPF0225 family.</text>
</comment>
<evidence type="ECO:0000255" key="1">
    <source>
        <dbReference type="HAMAP-Rule" id="MF_00612"/>
    </source>
</evidence>
<proteinExistence type="inferred from homology"/>
<reference key="1">
    <citation type="journal article" date="2001" name="Nature">
        <title>Genome sequence of Yersinia pestis, the causative agent of plague.</title>
        <authorList>
            <person name="Parkhill J."/>
            <person name="Wren B.W."/>
            <person name="Thomson N.R."/>
            <person name="Titball R.W."/>
            <person name="Holden M.T.G."/>
            <person name="Prentice M.B."/>
            <person name="Sebaihia M."/>
            <person name="James K.D."/>
            <person name="Churcher C.M."/>
            <person name="Mungall K.L."/>
            <person name="Baker S."/>
            <person name="Basham D."/>
            <person name="Bentley S.D."/>
            <person name="Brooks K."/>
            <person name="Cerdeno-Tarraga A.-M."/>
            <person name="Chillingworth T."/>
            <person name="Cronin A."/>
            <person name="Davies R.M."/>
            <person name="Davis P."/>
            <person name="Dougan G."/>
            <person name="Feltwell T."/>
            <person name="Hamlin N."/>
            <person name="Holroyd S."/>
            <person name="Jagels K."/>
            <person name="Karlyshev A.V."/>
            <person name="Leather S."/>
            <person name="Moule S."/>
            <person name="Oyston P.C.F."/>
            <person name="Quail M.A."/>
            <person name="Rutherford K.M."/>
            <person name="Simmonds M."/>
            <person name="Skelton J."/>
            <person name="Stevens K."/>
            <person name="Whitehead S."/>
            <person name="Barrell B.G."/>
        </authorList>
    </citation>
    <scope>NUCLEOTIDE SEQUENCE [LARGE SCALE GENOMIC DNA]</scope>
    <source>
        <strain>CO-92 / Biovar Orientalis</strain>
    </source>
</reference>
<reference key="2">
    <citation type="journal article" date="2002" name="J. Bacteriol.">
        <title>Genome sequence of Yersinia pestis KIM.</title>
        <authorList>
            <person name="Deng W."/>
            <person name="Burland V."/>
            <person name="Plunkett G. III"/>
            <person name="Boutin A."/>
            <person name="Mayhew G.F."/>
            <person name="Liss P."/>
            <person name="Perna N.T."/>
            <person name="Rose D.J."/>
            <person name="Mau B."/>
            <person name="Zhou S."/>
            <person name="Schwartz D.C."/>
            <person name="Fetherston J.D."/>
            <person name="Lindler L.E."/>
            <person name="Brubaker R.R."/>
            <person name="Plano G.V."/>
            <person name="Straley S.C."/>
            <person name="McDonough K.A."/>
            <person name="Nilles M.L."/>
            <person name="Matson J.S."/>
            <person name="Blattner F.R."/>
            <person name="Perry R.D."/>
        </authorList>
    </citation>
    <scope>NUCLEOTIDE SEQUENCE [LARGE SCALE GENOMIC DNA]</scope>
    <source>
        <strain>KIM10+ / Biovar Mediaevalis</strain>
    </source>
</reference>
<reference key="3">
    <citation type="journal article" date="2004" name="DNA Res.">
        <title>Complete genome sequence of Yersinia pestis strain 91001, an isolate avirulent to humans.</title>
        <authorList>
            <person name="Song Y."/>
            <person name="Tong Z."/>
            <person name="Wang J."/>
            <person name="Wang L."/>
            <person name="Guo Z."/>
            <person name="Han Y."/>
            <person name="Zhang J."/>
            <person name="Pei D."/>
            <person name="Zhou D."/>
            <person name="Qin H."/>
            <person name="Pang X."/>
            <person name="Han Y."/>
            <person name="Zhai J."/>
            <person name="Li M."/>
            <person name="Cui B."/>
            <person name="Qi Z."/>
            <person name="Jin L."/>
            <person name="Dai R."/>
            <person name="Chen F."/>
            <person name="Li S."/>
            <person name="Ye C."/>
            <person name="Du Z."/>
            <person name="Lin W."/>
            <person name="Wang J."/>
            <person name="Yu J."/>
            <person name="Yang H."/>
            <person name="Wang J."/>
            <person name="Huang P."/>
            <person name="Yang R."/>
        </authorList>
    </citation>
    <scope>NUCLEOTIDE SEQUENCE [LARGE SCALE GENOMIC DNA]</scope>
    <source>
        <strain>91001 / Biovar Mediaevalis</strain>
    </source>
</reference>
<sequence length="154" mass="17623">MSELCPCGSILNYHECCGPYILGTQVAAKPAILMRSRYCAYVEKNVDYLIATWHPDCHAQEWRESIIQGFTKTVWHGLTVIAETPGRHPDEAFVEFIARFTDADNAQITAMHERSRFLRIKEHWYYIDGIRPSLGRNDTCLCGSGKKHKKCCGR</sequence>
<dbReference type="EMBL" id="AL590842">
    <property type="protein sequence ID" value="CAL20803.1"/>
    <property type="molecule type" value="Genomic_DNA"/>
</dbReference>
<dbReference type="EMBL" id="AE009952">
    <property type="protein sequence ID" value="AAM85711.1"/>
    <property type="molecule type" value="Genomic_DNA"/>
</dbReference>
<dbReference type="EMBL" id="AE017042">
    <property type="protein sequence ID" value="AAS62188.1"/>
    <property type="molecule type" value="Genomic_DNA"/>
</dbReference>
<dbReference type="PIR" id="AH0264">
    <property type="entry name" value="AH0264"/>
</dbReference>
<dbReference type="RefSeq" id="WP_002210666.1">
    <property type="nucleotide sequence ID" value="NZ_WUCM01000121.1"/>
</dbReference>
<dbReference type="RefSeq" id="YP_002347146.1">
    <property type="nucleotide sequence ID" value="NC_003143.1"/>
</dbReference>
<dbReference type="SMR" id="Q8ZEJ5"/>
<dbReference type="IntAct" id="Q8ZEJ5">
    <property type="interactions" value="1"/>
</dbReference>
<dbReference type="STRING" id="214092.YPO2172"/>
<dbReference type="PaxDb" id="214092-YPO2172"/>
<dbReference type="DNASU" id="1147096"/>
<dbReference type="EnsemblBacteria" id="AAS62188">
    <property type="protein sequence ID" value="AAS62188"/>
    <property type="gene ID" value="YP_1971"/>
</dbReference>
<dbReference type="KEGG" id="ype:YPO2172"/>
<dbReference type="KEGG" id="ypk:y2149"/>
<dbReference type="KEGG" id="ypm:YP_1971"/>
<dbReference type="PATRIC" id="fig|214092.21.peg.2561"/>
<dbReference type="eggNOG" id="COG3012">
    <property type="taxonomic scope" value="Bacteria"/>
</dbReference>
<dbReference type="HOGENOM" id="CLU_099590_0_0_6"/>
<dbReference type="OMA" id="WLYVDGD"/>
<dbReference type="OrthoDB" id="21421at2"/>
<dbReference type="Proteomes" id="UP000000815">
    <property type="component" value="Chromosome"/>
</dbReference>
<dbReference type="Proteomes" id="UP000001019">
    <property type="component" value="Chromosome"/>
</dbReference>
<dbReference type="Proteomes" id="UP000002490">
    <property type="component" value="Chromosome"/>
</dbReference>
<dbReference type="Gene3D" id="3.10.450.50">
    <property type="match status" value="1"/>
</dbReference>
<dbReference type="HAMAP" id="MF_00612">
    <property type="entry name" value="UPF0225"/>
    <property type="match status" value="1"/>
</dbReference>
<dbReference type="InterPro" id="IPR032710">
    <property type="entry name" value="NTF2-like_dom_sf"/>
</dbReference>
<dbReference type="InterPro" id="IPR004027">
    <property type="entry name" value="SEC_C_motif"/>
</dbReference>
<dbReference type="InterPro" id="IPR023006">
    <property type="entry name" value="UPF0225"/>
</dbReference>
<dbReference type="InterPro" id="IPR048469">
    <property type="entry name" value="YchJ-like_M"/>
</dbReference>
<dbReference type="NCBIfam" id="NF002449">
    <property type="entry name" value="PRK01617.1"/>
    <property type="match status" value="1"/>
</dbReference>
<dbReference type="NCBIfam" id="NF002486">
    <property type="entry name" value="PRK01752.1"/>
    <property type="match status" value="1"/>
</dbReference>
<dbReference type="PANTHER" id="PTHR33747:SF1">
    <property type="entry name" value="ADENYLATE CYCLASE-ASSOCIATED CAP C-TERMINAL DOMAIN-CONTAINING PROTEIN"/>
    <property type="match status" value="1"/>
</dbReference>
<dbReference type="PANTHER" id="PTHR33747">
    <property type="entry name" value="UPF0225 PROTEIN SCO1677"/>
    <property type="match status" value="1"/>
</dbReference>
<dbReference type="Pfam" id="PF02810">
    <property type="entry name" value="SEC-C"/>
    <property type="match status" value="2"/>
</dbReference>
<dbReference type="Pfam" id="PF17775">
    <property type="entry name" value="YchJ_M-like"/>
    <property type="match status" value="1"/>
</dbReference>
<dbReference type="SUPFAM" id="SSF54427">
    <property type="entry name" value="NTF2-like"/>
    <property type="match status" value="1"/>
</dbReference>
<dbReference type="SUPFAM" id="SSF103642">
    <property type="entry name" value="Sec-C motif"/>
    <property type="match status" value="1"/>
</dbReference>
<gene>
    <name type="ordered locus">YPO2172</name>
    <name type="ordered locus">y2149</name>
    <name type="ordered locus">YP_1971</name>
</gene>
<feature type="chain" id="PRO_0000071824" description="UPF0225 protein YPO2172/y2149/YP_1971">
    <location>
        <begin position="1"/>
        <end position="154"/>
    </location>
</feature>